<proteinExistence type="evidence at protein level"/>
<sequence length="219" mass="21605">MRFALTLTAFVGSVAALSITSPKKDQDVDLSEKTTIEWSSVSSDPSSFDIYLVKMNSYPPVNKLVAENVKTSEGSYTIDGVSADNGSGYQINFVSRDPQNTGILAQSQQFKVESSGSSTTSDSTSSASATGSASTSSSSTGTVSSTASASATASASATASSTLSKSASGTASKTASATGSETSGASASSTSSPTTTPNGAGSLTVPAGSLLLGLVALAL</sequence>
<keyword id="KW-1003">Cell membrane</keyword>
<keyword id="KW-0903">Direct protein sequencing</keyword>
<keyword id="KW-0325">Glycoprotein</keyword>
<keyword id="KW-0336">GPI-anchor</keyword>
<keyword id="KW-0449">Lipoprotein</keyword>
<keyword id="KW-0472">Membrane</keyword>
<keyword id="KW-1185">Reference proteome</keyword>
<keyword id="KW-0732">Signal</keyword>
<evidence type="ECO:0000255" key="1"/>
<evidence type="ECO:0000256" key="2">
    <source>
        <dbReference type="SAM" id="MobiDB-lite"/>
    </source>
</evidence>
<evidence type="ECO:0000305" key="3"/>
<gene>
    <name type="ORF">AFUA_3G00880</name>
</gene>
<accession>Q4WFV6</accession>
<feature type="signal peptide" evidence="1">
    <location>
        <begin position="1"/>
        <end position="16"/>
    </location>
</feature>
<feature type="chain" id="PRO_0000245566" description="UPF0619 GPI-anchored membrane protein AFUA_3G00880">
    <location>
        <begin position="17"/>
        <end position="198"/>
    </location>
</feature>
<feature type="propeptide" id="PRO_0000245567" description="Removed in mature form" evidence="1">
    <location>
        <begin position="199"/>
        <end position="219"/>
    </location>
</feature>
<feature type="region of interest" description="Disordered" evidence="2">
    <location>
        <begin position="107"/>
        <end position="144"/>
    </location>
</feature>
<feature type="region of interest" description="Disordered" evidence="2">
    <location>
        <begin position="160"/>
        <end position="205"/>
    </location>
</feature>
<feature type="compositionally biased region" description="Low complexity" evidence="2">
    <location>
        <begin position="114"/>
        <end position="144"/>
    </location>
</feature>
<feature type="lipid moiety-binding region" description="GPI-like-anchor amidated asparagine" evidence="1">
    <location>
        <position position="198"/>
    </location>
</feature>
<feature type="glycosylation site" description="N-linked (GlcNAc...) asparagine" evidence="1">
    <location>
        <position position="85"/>
    </location>
</feature>
<comment type="subcellular location">
    <subcellularLocation>
        <location>Cell membrane</location>
        <topology>Lipid-anchor</topology>
        <topology>GPI-anchor</topology>
    </subcellularLocation>
</comment>
<comment type="PTM">
    <text>The GPI-like anchor contains a phosphoceramide lipid group. The anchor position has not been determined.</text>
</comment>
<comment type="similarity">
    <text evidence="3">Belongs to the UPF0619 family.</text>
</comment>
<reference key="1">
    <citation type="journal article" date="2005" name="Nature">
        <title>Genomic sequence of the pathogenic and allergenic filamentous fungus Aspergillus fumigatus.</title>
        <authorList>
            <person name="Nierman W.C."/>
            <person name="Pain A."/>
            <person name="Anderson M.J."/>
            <person name="Wortman J.R."/>
            <person name="Kim H.S."/>
            <person name="Arroyo J."/>
            <person name="Berriman M."/>
            <person name="Abe K."/>
            <person name="Archer D.B."/>
            <person name="Bermejo C."/>
            <person name="Bennett J.W."/>
            <person name="Bowyer P."/>
            <person name="Chen D."/>
            <person name="Collins M."/>
            <person name="Coulsen R."/>
            <person name="Davies R."/>
            <person name="Dyer P.S."/>
            <person name="Farman M.L."/>
            <person name="Fedorova N."/>
            <person name="Fedorova N.D."/>
            <person name="Feldblyum T.V."/>
            <person name="Fischer R."/>
            <person name="Fosker N."/>
            <person name="Fraser A."/>
            <person name="Garcia J.L."/>
            <person name="Garcia M.J."/>
            <person name="Goble A."/>
            <person name="Goldman G.H."/>
            <person name="Gomi K."/>
            <person name="Griffith-Jones S."/>
            <person name="Gwilliam R."/>
            <person name="Haas B.J."/>
            <person name="Haas H."/>
            <person name="Harris D.E."/>
            <person name="Horiuchi H."/>
            <person name="Huang J."/>
            <person name="Humphray S."/>
            <person name="Jimenez J."/>
            <person name="Keller N."/>
            <person name="Khouri H."/>
            <person name="Kitamoto K."/>
            <person name="Kobayashi T."/>
            <person name="Konzack S."/>
            <person name="Kulkarni R."/>
            <person name="Kumagai T."/>
            <person name="Lafton A."/>
            <person name="Latge J.-P."/>
            <person name="Li W."/>
            <person name="Lord A."/>
            <person name="Lu C."/>
            <person name="Majoros W.H."/>
            <person name="May G.S."/>
            <person name="Miller B.L."/>
            <person name="Mohamoud Y."/>
            <person name="Molina M."/>
            <person name="Monod M."/>
            <person name="Mouyna I."/>
            <person name="Mulligan S."/>
            <person name="Murphy L.D."/>
            <person name="O'Neil S."/>
            <person name="Paulsen I."/>
            <person name="Penalva M.A."/>
            <person name="Pertea M."/>
            <person name="Price C."/>
            <person name="Pritchard B.L."/>
            <person name="Quail M.A."/>
            <person name="Rabbinowitsch E."/>
            <person name="Rawlins N."/>
            <person name="Rajandream M.A."/>
            <person name="Reichard U."/>
            <person name="Renauld H."/>
            <person name="Robson G.D."/>
            <person name="Rodriguez de Cordoba S."/>
            <person name="Rodriguez-Pena J.M."/>
            <person name="Ronning C.M."/>
            <person name="Rutter S."/>
            <person name="Salzberg S.L."/>
            <person name="Sanchez M."/>
            <person name="Sanchez-Ferrero J.C."/>
            <person name="Saunders D."/>
            <person name="Seeger K."/>
            <person name="Squares R."/>
            <person name="Squares S."/>
            <person name="Takeuchi M."/>
            <person name="Tekaia F."/>
            <person name="Turner G."/>
            <person name="Vazquez de Aldana C.R."/>
            <person name="Weidman J."/>
            <person name="White O."/>
            <person name="Woodward J.R."/>
            <person name="Yu J.-H."/>
            <person name="Fraser C.M."/>
            <person name="Galagan J.E."/>
            <person name="Asai K."/>
            <person name="Machida M."/>
            <person name="Hall N."/>
            <person name="Barrell B.G."/>
            <person name="Denning D.W."/>
        </authorList>
    </citation>
    <scope>NUCLEOTIDE SEQUENCE [LARGE SCALE GENOMIC DNA]</scope>
    <source>
        <strain>ATCC MYA-4609 / CBS 101355 / FGSC A1100 / Af293</strain>
    </source>
</reference>
<reference key="2">
    <citation type="journal article" date="2001" name="Electrophoresis">
        <title>Proteome analysis of Aspergillus fumigatus identifies glycosylphosphatidylinositol-anchored proteins associated to the cell wall biosynthesis.</title>
        <authorList>
            <person name="Bruneau J.-M."/>
            <person name="Magnin T."/>
            <person name="Tagat E."/>
            <person name="Legrand R."/>
            <person name="Bernard M."/>
            <person name="Diaquin M."/>
            <person name="Fudali C."/>
            <person name="Latge J.-P."/>
        </authorList>
    </citation>
    <scope>PROTEIN SEQUENCE OF 97-111</scope>
    <scope>GPI-ANCHOR</scope>
</reference>
<reference key="3">
    <citation type="journal article" date="2003" name="Glycobiology">
        <title>Structures of the glycosylphosphatidylinositol membrane anchors from Aspergillus fumigatus membrane proteins.</title>
        <authorList>
            <person name="Fontaine T."/>
            <person name="Magnin T."/>
            <person name="Melhert A."/>
            <person name="Lamont D."/>
            <person name="Latge J.-P."/>
            <person name="Ferguson M.A.J."/>
        </authorList>
    </citation>
    <scope>STRUCTURE OF GPI-ANCHOR</scope>
</reference>
<protein>
    <recommendedName>
        <fullName>UPF0619 GPI-anchored membrane protein AFUA_3G00880</fullName>
    </recommendedName>
</protein>
<organism>
    <name type="scientific">Aspergillus fumigatus (strain ATCC MYA-4609 / CBS 101355 / FGSC A1100 / Af293)</name>
    <name type="common">Neosartorya fumigata</name>
    <dbReference type="NCBI Taxonomy" id="330879"/>
    <lineage>
        <taxon>Eukaryota</taxon>
        <taxon>Fungi</taxon>
        <taxon>Dikarya</taxon>
        <taxon>Ascomycota</taxon>
        <taxon>Pezizomycotina</taxon>
        <taxon>Eurotiomycetes</taxon>
        <taxon>Eurotiomycetidae</taxon>
        <taxon>Eurotiales</taxon>
        <taxon>Aspergillaceae</taxon>
        <taxon>Aspergillus</taxon>
        <taxon>Aspergillus subgen. Fumigati</taxon>
    </lineage>
</organism>
<name>YA880_ASPFU</name>
<dbReference type="EMBL" id="AAHF01000010">
    <property type="protein sequence ID" value="EAL86371.1"/>
    <property type="molecule type" value="Genomic_DNA"/>
</dbReference>
<dbReference type="RefSeq" id="XP_748409.1">
    <property type="nucleotide sequence ID" value="XM_743316.1"/>
</dbReference>
<dbReference type="STRING" id="330879.Q4WFV6"/>
<dbReference type="EnsemblFungi" id="EAL86371">
    <property type="protein sequence ID" value="EAL86371"/>
    <property type="gene ID" value="AFUA_3G00880"/>
</dbReference>
<dbReference type="GeneID" id="3505933"/>
<dbReference type="KEGG" id="afm:AFUA_3G00880"/>
<dbReference type="VEuPathDB" id="FungiDB:Afu3g00880"/>
<dbReference type="eggNOG" id="ENOG502S7YR">
    <property type="taxonomic scope" value="Eukaryota"/>
</dbReference>
<dbReference type="HOGENOM" id="CLU_088618_1_1_1"/>
<dbReference type="InParanoid" id="Q4WFV6"/>
<dbReference type="OMA" id="SFDIYLV"/>
<dbReference type="OrthoDB" id="5316007at2759"/>
<dbReference type="Proteomes" id="UP000002530">
    <property type="component" value="Chromosome 3"/>
</dbReference>
<dbReference type="GO" id="GO:0005886">
    <property type="term" value="C:plasma membrane"/>
    <property type="evidence" value="ECO:0007669"/>
    <property type="project" value="UniProtKB-SubCell"/>
</dbReference>
<dbReference type="GO" id="GO:0098552">
    <property type="term" value="C:side of membrane"/>
    <property type="evidence" value="ECO:0007669"/>
    <property type="project" value="UniProtKB-KW"/>
</dbReference>
<dbReference type="InterPro" id="IPR052479">
    <property type="entry name" value="GPI-anchor_Adhesion_Reg"/>
</dbReference>
<dbReference type="InterPro" id="IPR018466">
    <property type="entry name" value="Kre9/Knh1-like_N"/>
</dbReference>
<dbReference type="PANTHER" id="PTHR35185">
    <property type="entry name" value="SERINE/THREONINE-RICH PROTEIN ADG2-RELATED"/>
    <property type="match status" value="1"/>
</dbReference>
<dbReference type="PANTHER" id="PTHR35185:SF1">
    <property type="entry name" value="UPF0619 GPI-ANCHORED MEMBRANE PROTEIN C1322.10"/>
    <property type="match status" value="1"/>
</dbReference>
<dbReference type="Pfam" id="PF10342">
    <property type="entry name" value="Kre9_KNH"/>
    <property type="match status" value="1"/>
</dbReference>